<feature type="signal peptide" evidence="2">
    <location>
        <begin position="1"/>
        <end position="25"/>
    </location>
</feature>
<feature type="chain" id="PRO_0000002958" description="Iron transport multicopper oxidase FET3">
    <location>
        <begin position="26"/>
        <end position="631"/>
    </location>
</feature>
<feature type="topological domain" description="Extracellular" evidence="2">
    <location>
        <begin position="26"/>
        <end position="564"/>
    </location>
</feature>
<feature type="transmembrane region" description="Helical" evidence="2">
    <location>
        <begin position="565"/>
        <end position="585"/>
    </location>
</feature>
<feature type="topological domain" description="Cytoplasmic" evidence="2">
    <location>
        <begin position="586"/>
        <end position="630"/>
    </location>
</feature>
<feature type="domain" description="Plastocyanin-like 1">
    <location>
        <begin position="50"/>
        <end position="148"/>
    </location>
</feature>
<feature type="domain" description="Plastocyanin-like 2">
    <location>
        <begin position="195"/>
        <end position="297"/>
    </location>
</feature>
<feature type="domain" description="Plastocyanin-like 3">
    <location>
        <begin position="387"/>
        <end position="506"/>
    </location>
</feature>
<feature type="region of interest" description="Disordered" evidence="3">
    <location>
        <begin position="610"/>
        <end position="631"/>
    </location>
</feature>
<feature type="compositionally biased region" description="Basic and acidic residues" evidence="3">
    <location>
        <begin position="622"/>
        <end position="631"/>
    </location>
</feature>
<feature type="binding site" description="type 2 copper site" evidence="1">
    <location>
        <position position="85"/>
    </location>
    <ligand>
        <name>Cu cation</name>
        <dbReference type="ChEBI" id="CHEBI:23378"/>
        <label>1</label>
    </ligand>
</feature>
<feature type="binding site" description="type 3 copper site" evidence="1">
    <location>
        <position position="87"/>
    </location>
    <ligand>
        <name>Cu cation</name>
        <dbReference type="ChEBI" id="CHEBI:23378"/>
        <label>2</label>
    </ligand>
</feature>
<feature type="binding site" description="type 3 copper site" evidence="1">
    <location>
        <position position="130"/>
    </location>
    <ligand>
        <name>Cu cation</name>
        <dbReference type="ChEBI" id="CHEBI:23378"/>
        <label>2</label>
    </ligand>
</feature>
<feature type="binding site" description="type 3 copper site" evidence="1">
    <location>
        <position position="132"/>
    </location>
    <ligand>
        <name>Cu cation</name>
        <dbReference type="ChEBI" id="CHEBI:23378"/>
        <label>3</label>
    </ligand>
</feature>
<feature type="binding site" description="type 1 copper site" evidence="1">
    <location>
        <position position="418"/>
    </location>
    <ligand>
        <name>Cu cation</name>
        <dbReference type="ChEBI" id="CHEBI:23378"/>
        <label>4</label>
    </ligand>
</feature>
<feature type="binding site" description="type 2 copper site" evidence="1">
    <location>
        <position position="421"/>
    </location>
    <ligand>
        <name>Cu cation</name>
        <dbReference type="ChEBI" id="CHEBI:23378"/>
        <label>1</label>
    </ligand>
</feature>
<feature type="binding site" description="type 3 copper site" evidence="1">
    <location>
        <position position="423"/>
    </location>
    <ligand>
        <name>Cu cation</name>
        <dbReference type="ChEBI" id="CHEBI:23378"/>
        <label>3</label>
    </ligand>
</feature>
<feature type="binding site" description="type 3 copper site" evidence="1">
    <location>
        <position position="488"/>
    </location>
    <ligand>
        <name>Cu cation</name>
        <dbReference type="ChEBI" id="CHEBI:23378"/>
        <label>3</label>
    </ligand>
</feature>
<feature type="binding site" description="type 1 copper site" evidence="1">
    <location>
        <position position="489"/>
    </location>
    <ligand>
        <name>Cu cation</name>
        <dbReference type="ChEBI" id="CHEBI:23378"/>
        <label>4</label>
    </ligand>
</feature>
<feature type="binding site" description="type 3 copper site" evidence="1">
    <location>
        <position position="490"/>
    </location>
    <ligand>
        <name>Cu cation</name>
        <dbReference type="ChEBI" id="CHEBI:23378"/>
        <label>2</label>
    </ligand>
</feature>
<feature type="binding site" description="type 1 copper site" evidence="1">
    <location>
        <position position="494"/>
    </location>
    <ligand>
        <name>Cu cation</name>
        <dbReference type="ChEBI" id="CHEBI:23378"/>
        <label>4</label>
    </ligand>
</feature>
<feature type="glycosylation site" description="N-linked (GlcNAc...) asparagine" evidence="2">
    <location>
        <position position="31"/>
    </location>
</feature>
<feature type="glycosylation site" description="N-linked (GlcNAc...) asparagine" evidence="2">
    <location>
        <position position="81"/>
    </location>
</feature>
<feature type="glycosylation site" description="N-linked (GlcNAc...) asparagine" evidence="2">
    <location>
        <position position="92"/>
    </location>
</feature>
<feature type="glycosylation site" description="N-linked (GlcNAc...) asparagine" evidence="2">
    <location>
        <position position="117"/>
    </location>
</feature>
<feature type="glycosylation site" description="N-linked (GlcNAc...) asparagine" evidence="2">
    <location>
        <position position="199"/>
    </location>
</feature>
<feature type="glycosylation site" description="N-linked (GlcNAc...) asparagine" evidence="2">
    <location>
        <position position="203"/>
    </location>
</feature>
<feature type="glycosylation site" description="N-linked (GlcNAc...) asparagine" evidence="2">
    <location>
        <position position="249"/>
    </location>
</feature>
<feature type="glycosylation site" description="N-linked (GlcNAc...) asparagine" evidence="2">
    <location>
        <position position="270"/>
    </location>
</feature>
<feature type="glycosylation site" description="N-linked (GlcNAc...) asparagine" evidence="2">
    <location>
        <position position="297"/>
    </location>
</feature>
<feature type="glycosylation site" description="N-linked (GlcNAc...) asparagine" evidence="2">
    <location>
        <position position="364"/>
    </location>
</feature>
<feature type="glycosylation site" description="N-linked (GlcNAc...) asparagine" evidence="2">
    <location>
        <position position="413"/>
    </location>
</feature>
<comment type="function">
    <text evidence="1">Iron transport multicopper ferroxidase required for Fe(2+) high affinity uptake. Required to oxidize Fe(2+) and release it from the transporter. Essential component of copper-dependent iron transport (By similarity).</text>
</comment>
<comment type="cofactor">
    <cofactor evidence="1">
        <name>Cu cation</name>
        <dbReference type="ChEBI" id="CHEBI:23378"/>
    </cofactor>
    <text evidence="1">Binds 4 Cu cations per monomer.</text>
</comment>
<comment type="subcellular location">
    <subcellularLocation>
        <location evidence="4">Cell membrane</location>
        <topology evidence="4">Single-pass type I membrane protein</topology>
        <orientation evidence="4">Extracellular side</orientation>
    </subcellularLocation>
</comment>
<comment type="similarity">
    <text evidence="4">Belongs to the multicopper oxidase family.</text>
</comment>
<name>FET3_KLULA</name>
<evidence type="ECO:0000250" key="1"/>
<evidence type="ECO:0000255" key="2"/>
<evidence type="ECO:0000256" key="3">
    <source>
        <dbReference type="SAM" id="MobiDB-lite"/>
    </source>
</evidence>
<evidence type="ECO:0000305" key="4"/>
<protein>
    <recommendedName>
        <fullName>Iron transport multicopper oxidase FET3</fullName>
        <ecNumber>1.-.-.-</ecNumber>
    </recommendedName>
</protein>
<reference key="1">
    <citation type="journal article" date="2004" name="Nature">
        <title>Genome evolution in yeasts.</title>
        <authorList>
            <person name="Dujon B."/>
            <person name="Sherman D."/>
            <person name="Fischer G."/>
            <person name="Durrens P."/>
            <person name="Casaregola S."/>
            <person name="Lafontaine I."/>
            <person name="de Montigny J."/>
            <person name="Marck C."/>
            <person name="Neuveglise C."/>
            <person name="Talla E."/>
            <person name="Goffard N."/>
            <person name="Frangeul L."/>
            <person name="Aigle M."/>
            <person name="Anthouard V."/>
            <person name="Babour A."/>
            <person name="Barbe V."/>
            <person name="Barnay S."/>
            <person name="Blanchin S."/>
            <person name="Beckerich J.-M."/>
            <person name="Beyne E."/>
            <person name="Bleykasten C."/>
            <person name="Boisrame A."/>
            <person name="Boyer J."/>
            <person name="Cattolico L."/>
            <person name="Confanioleri F."/>
            <person name="de Daruvar A."/>
            <person name="Despons L."/>
            <person name="Fabre E."/>
            <person name="Fairhead C."/>
            <person name="Ferry-Dumazet H."/>
            <person name="Groppi A."/>
            <person name="Hantraye F."/>
            <person name="Hennequin C."/>
            <person name="Jauniaux N."/>
            <person name="Joyet P."/>
            <person name="Kachouri R."/>
            <person name="Kerrest A."/>
            <person name="Koszul R."/>
            <person name="Lemaire M."/>
            <person name="Lesur I."/>
            <person name="Ma L."/>
            <person name="Muller H."/>
            <person name="Nicaud J.-M."/>
            <person name="Nikolski M."/>
            <person name="Oztas S."/>
            <person name="Ozier-Kalogeropoulos O."/>
            <person name="Pellenz S."/>
            <person name="Potier S."/>
            <person name="Richard G.-F."/>
            <person name="Straub M.-L."/>
            <person name="Suleau A."/>
            <person name="Swennen D."/>
            <person name="Tekaia F."/>
            <person name="Wesolowski-Louvel M."/>
            <person name="Westhof E."/>
            <person name="Wirth B."/>
            <person name="Zeniou-Meyer M."/>
            <person name="Zivanovic Y."/>
            <person name="Bolotin-Fukuhara M."/>
            <person name="Thierry A."/>
            <person name="Bouchier C."/>
            <person name="Caudron B."/>
            <person name="Scarpelli C."/>
            <person name="Gaillardin C."/>
            <person name="Weissenbach J."/>
            <person name="Wincker P."/>
            <person name="Souciet J.-L."/>
        </authorList>
    </citation>
    <scope>NUCLEOTIDE SEQUENCE [LARGE SCALE GENOMIC DNA]</scope>
    <source>
        <strain>ATCC 8585 / CBS 2359 / DSM 70799 / NBRC 1267 / NRRL Y-1140 / WM37</strain>
    </source>
</reference>
<sequence>MKVSTHHFLPSLLVALWSWATVAQAATHTFNWTTGWGNYNVDGNFERPVITCNGEFPWPDLKVKRGDRIQVYLTNGFDDRNTSLHFHGLSQNGTNMMDGPEMITQCPIAPGDTMLYNFTIDDNDGTYWYHSHTGGQYQDGMKGTLVVEPEDSLPFDYDEEVVVQLAEWYYDNVDTLDRKFMNVYNPTGAEPIPQNLIINNTRNMTWNVEPDTTYLLRIVNTGGFVSQYFWIEDHDMTVVEVDGVYVEKNTTSMLYITVAQRYSVLIHTKNDTSKNYAIMQKFDDTMLDVIPNDLMLNATSYMMYDKDGEKPEQSYVDSIDDFLDDFYLTPLDKVELYEDPDYTITVDVVMDNLKNGVNYAFFNNLTFTAPKVPTLMTALSAGKDALNPLVYGTNTNAFVLKKDEIIEIVLNNNDTGKHPFHLHGHIFQLVDRERGYDDAIGEGPHPFDPEDHNPFPDYPMMRDTVYVNPQSSIVLRFKADNPGVWFFHCHIEWHLKQGLALLLIEAPEEMQNTESQQLTDNHKQVCENVGLSWEGNAAGNTNDFLDLVGQNVQVANIPDGFTAKGIVAMTFSCLAGVLGLISLSTYGLMGVKKSEEEIIRDLGMDPDAVEKVDVSDINSDEDSSRTSKNIE</sequence>
<dbReference type="EC" id="1.-.-.-"/>
<dbReference type="EMBL" id="CR382126">
    <property type="protein sequence ID" value="CAG98964.1"/>
    <property type="molecule type" value="Genomic_DNA"/>
</dbReference>
<dbReference type="RefSeq" id="XP_456256.1">
    <property type="nucleotide sequence ID" value="XM_456256.1"/>
</dbReference>
<dbReference type="SMR" id="Q6CII3"/>
<dbReference type="FunCoup" id="Q6CII3">
    <property type="interactions" value="780"/>
</dbReference>
<dbReference type="STRING" id="284590.Q6CII3"/>
<dbReference type="GlyCosmos" id="Q6CII3">
    <property type="glycosylation" value="11 sites, No reported glycans"/>
</dbReference>
<dbReference type="PaxDb" id="284590-Q6CII3"/>
<dbReference type="KEGG" id="kla:KLLA0_F26400g"/>
<dbReference type="eggNOG" id="KOG1263">
    <property type="taxonomic scope" value="Eukaryota"/>
</dbReference>
<dbReference type="HOGENOM" id="CLU_006504_7_3_1"/>
<dbReference type="InParanoid" id="Q6CII3"/>
<dbReference type="OMA" id="CDIAPGS"/>
<dbReference type="Proteomes" id="UP000000598">
    <property type="component" value="Chromosome F"/>
</dbReference>
<dbReference type="GO" id="GO:0033573">
    <property type="term" value="C:high-affinity iron permease complex"/>
    <property type="evidence" value="ECO:0007669"/>
    <property type="project" value="TreeGrafter"/>
</dbReference>
<dbReference type="GO" id="GO:0005507">
    <property type="term" value="F:copper ion binding"/>
    <property type="evidence" value="ECO:0007669"/>
    <property type="project" value="InterPro"/>
</dbReference>
<dbReference type="GO" id="GO:0004322">
    <property type="term" value="F:ferroxidase activity"/>
    <property type="evidence" value="ECO:0007669"/>
    <property type="project" value="TreeGrafter"/>
</dbReference>
<dbReference type="GO" id="GO:0010106">
    <property type="term" value="P:cellular response to iron ion starvation"/>
    <property type="evidence" value="ECO:0007669"/>
    <property type="project" value="TreeGrafter"/>
</dbReference>
<dbReference type="GO" id="GO:0033215">
    <property type="term" value="P:reductive iron assimilation"/>
    <property type="evidence" value="ECO:0007669"/>
    <property type="project" value="TreeGrafter"/>
</dbReference>
<dbReference type="CDD" id="cd13851">
    <property type="entry name" value="CuRO_1_Fet3p"/>
    <property type="match status" value="1"/>
</dbReference>
<dbReference type="CDD" id="cd13877">
    <property type="entry name" value="CuRO_2_Fet3p_like"/>
    <property type="match status" value="1"/>
</dbReference>
<dbReference type="CDD" id="cd13899">
    <property type="entry name" value="CuRO_3_Fet3p"/>
    <property type="match status" value="1"/>
</dbReference>
<dbReference type="FunFam" id="2.60.40.420:FF:000022">
    <property type="entry name" value="FET5p Multicopper oxidase"/>
    <property type="match status" value="1"/>
</dbReference>
<dbReference type="FunFam" id="2.60.40.420:FF:000024">
    <property type="entry name" value="FET5p Multicopper oxidase"/>
    <property type="match status" value="1"/>
</dbReference>
<dbReference type="FunFam" id="2.60.40.420:FF:000025">
    <property type="entry name" value="FET5p Multicopper oxidase"/>
    <property type="match status" value="1"/>
</dbReference>
<dbReference type="Gene3D" id="2.60.40.420">
    <property type="entry name" value="Cupredoxins - blue copper proteins"/>
    <property type="match status" value="3"/>
</dbReference>
<dbReference type="InterPro" id="IPR011707">
    <property type="entry name" value="Cu-oxidase-like_N"/>
</dbReference>
<dbReference type="InterPro" id="IPR001117">
    <property type="entry name" value="Cu-oxidase_2nd"/>
</dbReference>
<dbReference type="InterPro" id="IPR011706">
    <property type="entry name" value="Cu-oxidase_C"/>
</dbReference>
<dbReference type="InterPro" id="IPR045087">
    <property type="entry name" value="Cu-oxidase_fam"/>
</dbReference>
<dbReference type="InterPro" id="IPR033138">
    <property type="entry name" value="Cu_oxidase_CS"/>
</dbReference>
<dbReference type="InterPro" id="IPR002355">
    <property type="entry name" value="Cu_oxidase_Cu_BS"/>
</dbReference>
<dbReference type="InterPro" id="IPR008972">
    <property type="entry name" value="Cupredoxin"/>
</dbReference>
<dbReference type="InterPro" id="IPR044130">
    <property type="entry name" value="CuRO_2_Fet3-like"/>
</dbReference>
<dbReference type="PANTHER" id="PTHR11709:SF361">
    <property type="entry name" value="IRON TRANSPORT MULTICOPPER OXIDASE FET3"/>
    <property type="match status" value="1"/>
</dbReference>
<dbReference type="PANTHER" id="PTHR11709">
    <property type="entry name" value="MULTI-COPPER OXIDASE"/>
    <property type="match status" value="1"/>
</dbReference>
<dbReference type="Pfam" id="PF00394">
    <property type="entry name" value="Cu-oxidase"/>
    <property type="match status" value="1"/>
</dbReference>
<dbReference type="Pfam" id="PF07731">
    <property type="entry name" value="Cu-oxidase_2"/>
    <property type="match status" value="1"/>
</dbReference>
<dbReference type="Pfam" id="PF07732">
    <property type="entry name" value="Cu-oxidase_3"/>
    <property type="match status" value="1"/>
</dbReference>
<dbReference type="SUPFAM" id="SSF49503">
    <property type="entry name" value="Cupredoxins"/>
    <property type="match status" value="3"/>
</dbReference>
<dbReference type="PROSITE" id="PS00079">
    <property type="entry name" value="MULTICOPPER_OXIDASE1"/>
    <property type="match status" value="2"/>
</dbReference>
<dbReference type="PROSITE" id="PS00080">
    <property type="entry name" value="MULTICOPPER_OXIDASE2"/>
    <property type="match status" value="1"/>
</dbReference>
<accession>Q6CII3</accession>
<organism>
    <name type="scientific">Kluyveromyces lactis (strain ATCC 8585 / CBS 2359 / DSM 70799 / NBRC 1267 / NRRL Y-1140 / WM37)</name>
    <name type="common">Yeast</name>
    <name type="synonym">Candida sphaerica</name>
    <dbReference type="NCBI Taxonomy" id="284590"/>
    <lineage>
        <taxon>Eukaryota</taxon>
        <taxon>Fungi</taxon>
        <taxon>Dikarya</taxon>
        <taxon>Ascomycota</taxon>
        <taxon>Saccharomycotina</taxon>
        <taxon>Saccharomycetes</taxon>
        <taxon>Saccharomycetales</taxon>
        <taxon>Saccharomycetaceae</taxon>
        <taxon>Kluyveromyces</taxon>
    </lineage>
</organism>
<proteinExistence type="inferred from homology"/>
<gene>
    <name type="primary">FET3</name>
    <name type="ordered locus">KLLA0F26400g</name>
</gene>
<keyword id="KW-1003">Cell membrane</keyword>
<keyword id="KW-0186">Copper</keyword>
<keyword id="KW-0325">Glycoprotein</keyword>
<keyword id="KW-0406">Ion transport</keyword>
<keyword id="KW-0408">Iron</keyword>
<keyword id="KW-0410">Iron transport</keyword>
<keyword id="KW-0472">Membrane</keyword>
<keyword id="KW-0479">Metal-binding</keyword>
<keyword id="KW-0560">Oxidoreductase</keyword>
<keyword id="KW-1185">Reference proteome</keyword>
<keyword id="KW-0677">Repeat</keyword>
<keyword id="KW-0732">Signal</keyword>
<keyword id="KW-0812">Transmembrane</keyword>
<keyword id="KW-1133">Transmembrane helix</keyword>
<keyword id="KW-0813">Transport</keyword>